<dbReference type="EMBL" id="CP001336">
    <property type="protein sequence ID" value="ACL22304.1"/>
    <property type="molecule type" value="Genomic_DNA"/>
</dbReference>
<dbReference type="RefSeq" id="WP_005816476.1">
    <property type="nucleotide sequence ID" value="NC_011830.1"/>
</dbReference>
<dbReference type="SMR" id="B8FUN4"/>
<dbReference type="KEGG" id="dhd:Dhaf_4299"/>
<dbReference type="HOGENOM" id="CLU_005965_2_4_9"/>
<dbReference type="Proteomes" id="UP000007726">
    <property type="component" value="Chromosome"/>
</dbReference>
<dbReference type="GO" id="GO:0005524">
    <property type="term" value="F:ATP binding"/>
    <property type="evidence" value="ECO:0007669"/>
    <property type="project" value="UniProtKB-UniRule"/>
</dbReference>
<dbReference type="GO" id="GO:0140662">
    <property type="term" value="F:ATP-dependent protein folding chaperone"/>
    <property type="evidence" value="ECO:0007669"/>
    <property type="project" value="InterPro"/>
</dbReference>
<dbReference type="GO" id="GO:0051082">
    <property type="term" value="F:unfolded protein binding"/>
    <property type="evidence" value="ECO:0007669"/>
    <property type="project" value="InterPro"/>
</dbReference>
<dbReference type="CDD" id="cd10234">
    <property type="entry name" value="ASKHA_NBD_HSP70_DnaK-like"/>
    <property type="match status" value="1"/>
</dbReference>
<dbReference type="FunFam" id="2.60.34.10:FF:000014">
    <property type="entry name" value="Chaperone protein DnaK HSP70"/>
    <property type="match status" value="1"/>
</dbReference>
<dbReference type="FunFam" id="1.20.1270.10:FF:000001">
    <property type="entry name" value="Molecular chaperone DnaK"/>
    <property type="match status" value="1"/>
</dbReference>
<dbReference type="FunFam" id="3.30.420.40:FF:000071">
    <property type="entry name" value="Molecular chaperone DnaK"/>
    <property type="match status" value="1"/>
</dbReference>
<dbReference type="FunFam" id="3.90.640.10:FF:000003">
    <property type="entry name" value="Molecular chaperone DnaK"/>
    <property type="match status" value="1"/>
</dbReference>
<dbReference type="Gene3D" id="1.20.1270.10">
    <property type="match status" value="1"/>
</dbReference>
<dbReference type="Gene3D" id="3.30.420.40">
    <property type="match status" value="2"/>
</dbReference>
<dbReference type="Gene3D" id="3.90.640.10">
    <property type="entry name" value="Actin, Chain A, domain 4"/>
    <property type="match status" value="1"/>
</dbReference>
<dbReference type="Gene3D" id="2.60.34.10">
    <property type="entry name" value="Substrate Binding Domain Of DNAk, Chain A, domain 1"/>
    <property type="match status" value="1"/>
</dbReference>
<dbReference type="HAMAP" id="MF_00332">
    <property type="entry name" value="DnaK"/>
    <property type="match status" value="1"/>
</dbReference>
<dbReference type="InterPro" id="IPR043129">
    <property type="entry name" value="ATPase_NBD"/>
</dbReference>
<dbReference type="InterPro" id="IPR012725">
    <property type="entry name" value="Chaperone_DnaK"/>
</dbReference>
<dbReference type="InterPro" id="IPR018181">
    <property type="entry name" value="Heat_shock_70_CS"/>
</dbReference>
<dbReference type="InterPro" id="IPR029048">
    <property type="entry name" value="HSP70_C_sf"/>
</dbReference>
<dbReference type="InterPro" id="IPR029047">
    <property type="entry name" value="HSP70_peptide-bd_sf"/>
</dbReference>
<dbReference type="InterPro" id="IPR013126">
    <property type="entry name" value="Hsp_70_fam"/>
</dbReference>
<dbReference type="NCBIfam" id="NF001413">
    <property type="entry name" value="PRK00290.1"/>
    <property type="match status" value="1"/>
</dbReference>
<dbReference type="NCBIfam" id="TIGR02350">
    <property type="entry name" value="prok_dnaK"/>
    <property type="match status" value="1"/>
</dbReference>
<dbReference type="PANTHER" id="PTHR19375">
    <property type="entry name" value="HEAT SHOCK PROTEIN 70KDA"/>
    <property type="match status" value="1"/>
</dbReference>
<dbReference type="Pfam" id="PF00012">
    <property type="entry name" value="HSP70"/>
    <property type="match status" value="1"/>
</dbReference>
<dbReference type="PRINTS" id="PR00301">
    <property type="entry name" value="HEATSHOCK70"/>
</dbReference>
<dbReference type="SUPFAM" id="SSF53067">
    <property type="entry name" value="Actin-like ATPase domain"/>
    <property type="match status" value="2"/>
</dbReference>
<dbReference type="SUPFAM" id="SSF100934">
    <property type="entry name" value="Heat shock protein 70kD (HSP70), C-terminal subdomain"/>
    <property type="match status" value="1"/>
</dbReference>
<dbReference type="SUPFAM" id="SSF100920">
    <property type="entry name" value="Heat shock protein 70kD (HSP70), peptide-binding domain"/>
    <property type="match status" value="1"/>
</dbReference>
<dbReference type="PROSITE" id="PS00297">
    <property type="entry name" value="HSP70_1"/>
    <property type="match status" value="1"/>
</dbReference>
<dbReference type="PROSITE" id="PS00329">
    <property type="entry name" value="HSP70_2"/>
    <property type="match status" value="1"/>
</dbReference>
<dbReference type="PROSITE" id="PS01036">
    <property type="entry name" value="HSP70_3"/>
    <property type="match status" value="1"/>
</dbReference>
<name>DNAK_DESHD</name>
<comment type="function">
    <text evidence="1">Acts as a chaperone.</text>
</comment>
<comment type="induction">
    <text evidence="1">By stress conditions e.g. heat shock.</text>
</comment>
<comment type="similarity">
    <text evidence="1">Belongs to the heat shock protein 70 family.</text>
</comment>
<evidence type="ECO:0000255" key="1">
    <source>
        <dbReference type="HAMAP-Rule" id="MF_00332"/>
    </source>
</evidence>
<evidence type="ECO:0000256" key="2">
    <source>
        <dbReference type="SAM" id="MobiDB-lite"/>
    </source>
</evidence>
<reference key="1">
    <citation type="journal article" date="2012" name="BMC Microbiol.">
        <title>Genome sequence of Desulfitobacterium hafniense DCB-2, a Gram-positive anaerobe capable of dehalogenation and metal reduction.</title>
        <authorList>
            <person name="Kim S.H."/>
            <person name="Harzman C."/>
            <person name="Davis J.K."/>
            <person name="Hutcheson R."/>
            <person name="Broderick J.B."/>
            <person name="Marsh T.L."/>
            <person name="Tiedje J.M."/>
        </authorList>
    </citation>
    <scope>NUCLEOTIDE SEQUENCE [LARGE SCALE GENOMIC DNA]</scope>
    <source>
        <strain>DSM 10664 / DCB-2</strain>
    </source>
</reference>
<protein>
    <recommendedName>
        <fullName evidence="1">Chaperone protein DnaK</fullName>
    </recommendedName>
    <alternativeName>
        <fullName evidence="1">HSP70</fullName>
    </alternativeName>
    <alternativeName>
        <fullName evidence="1">Heat shock 70 kDa protein</fullName>
    </alternativeName>
    <alternativeName>
        <fullName evidence="1">Heat shock protein 70</fullName>
    </alternativeName>
</protein>
<proteinExistence type="inferred from homology"/>
<accession>B8FUN4</accession>
<sequence>MGKVIGIDLGTTNSCVAVMEGGEAVVITNAEGNRTTPSVVGFSKTGERLAGQVAKRQAVSNPDKTVISIKRHMGTDYKVKIDDKSYSPQEISAMILQKLKADAEAYLGQTVTEAVITVPAYFTDAQRQATKDAGTIAGLDVKRIINEPTAAALAYGLDKQEDQTVLVFDLGGGTFDVSLLELSQGMVEVKATSGNNKLGGDDFDQRLIDYMVAEFKKDQGVDLAKDRVALQRLKEAAEKAKVELSGVSTTNVNLPFITMTGEGPAHLDMNITRAKFEELTADLVEATLGPTRQALADAKLSWNEVNQVILVGGSTRIPAVQEAIKKLSGKEPHKGVNPDEVVALGAAIQGGVLAGEVKDIILVDVTPLSLGIETLGGVFTRIIDRNTTVPTTKSQVFSTAADSQTSVDIHVLQGEREMAAYNKTLGRFQLSGIPPAPRGIPQIEVKFDIDANGIVHVSAKDMATGNEQKVTITASTGLSQEEIEKMKKDAEAHADEDKKRKELIDAKNQADSMVYQTEKTLKDFEGKIPDNEAEPIKKALEELKTAAAGENIELIKEKTEGVTKVLYPIIEKMYQQTGGAAPGPDMGADPGAGGAQGDDNVVDAEYTEVDKDQK</sequence>
<keyword id="KW-0067">ATP-binding</keyword>
<keyword id="KW-0143">Chaperone</keyword>
<keyword id="KW-0547">Nucleotide-binding</keyword>
<keyword id="KW-0597">Phosphoprotein</keyword>
<keyword id="KW-0346">Stress response</keyword>
<feature type="chain" id="PRO_1000133143" description="Chaperone protein DnaK">
    <location>
        <begin position="1"/>
        <end position="614"/>
    </location>
</feature>
<feature type="region of interest" description="Disordered" evidence="2">
    <location>
        <begin position="576"/>
        <end position="614"/>
    </location>
</feature>
<feature type="compositionally biased region" description="Low complexity" evidence="2">
    <location>
        <begin position="578"/>
        <end position="589"/>
    </location>
</feature>
<feature type="modified residue" description="Phosphothreonine; by autocatalysis" evidence="1">
    <location>
        <position position="174"/>
    </location>
</feature>
<gene>
    <name evidence="1" type="primary">dnaK</name>
    <name type="ordered locus">Dhaf_4299</name>
</gene>
<organism>
    <name type="scientific">Desulfitobacterium hafniense (strain DSM 10664 / DCB-2)</name>
    <dbReference type="NCBI Taxonomy" id="272564"/>
    <lineage>
        <taxon>Bacteria</taxon>
        <taxon>Bacillati</taxon>
        <taxon>Bacillota</taxon>
        <taxon>Clostridia</taxon>
        <taxon>Eubacteriales</taxon>
        <taxon>Desulfitobacteriaceae</taxon>
        <taxon>Desulfitobacterium</taxon>
    </lineage>
</organism>